<name>GLMS_CLOTE</name>
<dbReference type="EC" id="2.6.1.16" evidence="1"/>
<dbReference type="EMBL" id="AE015927">
    <property type="protein sequence ID" value="AAO37003.1"/>
    <property type="status" value="ALT_INIT"/>
    <property type="molecule type" value="Genomic_DNA"/>
</dbReference>
<dbReference type="RefSeq" id="WP_035111559.1">
    <property type="nucleotide sequence ID" value="NC_004557.1"/>
</dbReference>
<dbReference type="SMR" id="Q890U2"/>
<dbReference type="STRING" id="212717.CTC_02543"/>
<dbReference type="GeneID" id="24253418"/>
<dbReference type="KEGG" id="ctc:CTC_02543"/>
<dbReference type="HOGENOM" id="CLU_012520_5_2_9"/>
<dbReference type="OrthoDB" id="106547at2"/>
<dbReference type="Proteomes" id="UP000001412">
    <property type="component" value="Chromosome"/>
</dbReference>
<dbReference type="GO" id="GO:0005829">
    <property type="term" value="C:cytosol"/>
    <property type="evidence" value="ECO:0007669"/>
    <property type="project" value="TreeGrafter"/>
</dbReference>
<dbReference type="GO" id="GO:0097367">
    <property type="term" value="F:carbohydrate derivative binding"/>
    <property type="evidence" value="ECO:0007669"/>
    <property type="project" value="InterPro"/>
</dbReference>
<dbReference type="GO" id="GO:0004360">
    <property type="term" value="F:glutamine-fructose-6-phosphate transaminase (isomerizing) activity"/>
    <property type="evidence" value="ECO:0007669"/>
    <property type="project" value="UniProtKB-UniRule"/>
</dbReference>
<dbReference type="GO" id="GO:0005975">
    <property type="term" value="P:carbohydrate metabolic process"/>
    <property type="evidence" value="ECO:0007669"/>
    <property type="project" value="UniProtKB-UniRule"/>
</dbReference>
<dbReference type="GO" id="GO:0006002">
    <property type="term" value="P:fructose 6-phosphate metabolic process"/>
    <property type="evidence" value="ECO:0007669"/>
    <property type="project" value="TreeGrafter"/>
</dbReference>
<dbReference type="GO" id="GO:0006487">
    <property type="term" value="P:protein N-linked glycosylation"/>
    <property type="evidence" value="ECO:0007669"/>
    <property type="project" value="TreeGrafter"/>
</dbReference>
<dbReference type="GO" id="GO:0006047">
    <property type="term" value="P:UDP-N-acetylglucosamine metabolic process"/>
    <property type="evidence" value="ECO:0007669"/>
    <property type="project" value="TreeGrafter"/>
</dbReference>
<dbReference type="CDD" id="cd00714">
    <property type="entry name" value="GFAT"/>
    <property type="match status" value="1"/>
</dbReference>
<dbReference type="CDD" id="cd05008">
    <property type="entry name" value="SIS_GlmS_GlmD_1"/>
    <property type="match status" value="1"/>
</dbReference>
<dbReference type="CDD" id="cd05009">
    <property type="entry name" value="SIS_GlmS_GlmD_2"/>
    <property type="match status" value="1"/>
</dbReference>
<dbReference type="FunFam" id="3.40.50.10490:FF:000001">
    <property type="entry name" value="Glutamine--fructose-6-phosphate aminotransferase [isomerizing]"/>
    <property type="match status" value="1"/>
</dbReference>
<dbReference type="FunFam" id="3.40.50.10490:FF:000022">
    <property type="entry name" value="Glutamine--fructose-6-phosphate aminotransferase [isomerizing]"/>
    <property type="match status" value="1"/>
</dbReference>
<dbReference type="FunFam" id="3.60.20.10:FF:000006">
    <property type="entry name" value="Glutamine--fructose-6-phosphate aminotransferase [isomerizing]"/>
    <property type="match status" value="1"/>
</dbReference>
<dbReference type="Gene3D" id="3.40.50.10490">
    <property type="entry name" value="Glucose-6-phosphate isomerase like protein, domain 1"/>
    <property type="match status" value="2"/>
</dbReference>
<dbReference type="Gene3D" id="3.60.20.10">
    <property type="entry name" value="Glutamine Phosphoribosylpyrophosphate, subunit 1, domain 1"/>
    <property type="match status" value="1"/>
</dbReference>
<dbReference type="HAMAP" id="MF_00164">
    <property type="entry name" value="GlmS"/>
    <property type="match status" value="1"/>
</dbReference>
<dbReference type="InterPro" id="IPR017932">
    <property type="entry name" value="GATase_2_dom"/>
</dbReference>
<dbReference type="InterPro" id="IPR005855">
    <property type="entry name" value="GFAT"/>
</dbReference>
<dbReference type="InterPro" id="IPR047084">
    <property type="entry name" value="GFAT_N"/>
</dbReference>
<dbReference type="InterPro" id="IPR035466">
    <property type="entry name" value="GlmS/AgaS_SIS"/>
</dbReference>
<dbReference type="InterPro" id="IPR035490">
    <property type="entry name" value="GlmS/FrlB_SIS"/>
</dbReference>
<dbReference type="InterPro" id="IPR029055">
    <property type="entry name" value="Ntn_hydrolases_N"/>
</dbReference>
<dbReference type="InterPro" id="IPR001347">
    <property type="entry name" value="SIS_dom"/>
</dbReference>
<dbReference type="InterPro" id="IPR046348">
    <property type="entry name" value="SIS_dom_sf"/>
</dbReference>
<dbReference type="NCBIfam" id="TIGR01135">
    <property type="entry name" value="glmS"/>
    <property type="match status" value="1"/>
</dbReference>
<dbReference type="NCBIfam" id="NF001484">
    <property type="entry name" value="PRK00331.1"/>
    <property type="match status" value="1"/>
</dbReference>
<dbReference type="PANTHER" id="PTHR10937">
    <property type="entry name" value="GLUCOSAMINE--FRUCTOSE-6-PHOSPHATE AMINOTRANSFERASE, ISOMERIZING"/>
    <property type="match status" value="1"/>
</dbReference>
<dbReference type="PANTHER" id="PTHR10937:SF0">
    <property type="entry name" value="GLUTAMINE--FRUCTOSE-6-PHOSPHATE TRANSAMINASE (ISOMERIZING)"/>
    <property type="match status" value="1"/>
</dbReference>
<dbReference type="Pfam" id="PF13522">
    <property type="entry name" value="GATase_6"/>
    <property type="match status" value="1"/>
</dbReference>
<dbReference type="Pfam" id="PF01380">
    <property type="entry name" value="SIS"/>
    <property type="match status" value="2"/>
</dbReference>
<dbReference type="SUPFAM" id="SSF56235">
    <property type="entry name" value="N-terminal nucleophile aminohydrolases (Ntn hydrolases)"/>
    <property type="match status" value="1"/>
</dbReference>
<dbReference type="SUPFAM" id="SSF53697">
    <property type="entry name" value="SIS domain"/>
    <property type="match status" value="1"/>
</dbReference>
<dbReference type="PROSITE" id="PS51278">
    <property type="entry name" value="GATASE_TYPE_2"/>
    <property type="match status" value="1"/>
</dbReference>
<dbReference type="PROSITE" id="PS51464">
    <property type="entry name" value="SIS"/>
    <property type="match status" value="2"/>
</dbReference>
<sequence>MCGIVGYIGKKEAAPILVEGLSKLEYRGYDSAGVAIIEDQVIRTRKCKGRLVNLEEKLNEESMIGDIGIGHTRWATHGEPSDKNSHPHNNEKGTISVVHNGIIENYIELREWLTSEGYKFVSETDTEVLPHLIDYYYKGDLLEAVMTAISKVEGSYAIGVVCSEEPDKVVAVRKDSPLIVGLGEEEYFIASDIPAVLNHTRDIYLLKDNEFVLMTKDGVKLFDKEGKEIKREIYHVTWNADAAEKGGYDHFMLKEIHEQPKVIKDTMTSRIMLGKDIKLDNIEISKEQMEKINKIYIVACGTAYHAGLVGKYTIEKLARIPVEVDIASEFRYKNPIIDKDTLMIVISQSGETADTLAALREAKKKGARVIAVTNVVGSSISREADDILYTWAGPEIAVASTKAYETQLVAMYILALYFAQEKGTLNKEELEELKEEMLSIPDKAEKCLETDEIMKKLASKTHMKKDMFFLGRGLDYAVALEGSLKLKEISYIHSEAYAAGELKHGPIALIEEGTIVITLATQEELFDKTVSNIKEVTTRGAKAIGIAFEGQKNMDKAVEEAIYIPKTKSIFAPLLSVIPLQLYSYYVSLEKGCDVDKPRNLAKSVTVE</sequence>
<proteinExistence type="inferred from homology"/>
<protein>
    <recommendedName>
        <fullName evidence="1">Glutamine--fructose-6-phosphate aminotransferase [isomerizing]</fullName>
        <ecNumber evidence="1">2.6.1.16</ecNumber>
    </recommendedName>
    <alternativeName>
        <fullName evidence="1">D-fructose-6-phosphate amidotransferase</fullName>
    </alternativeName>
    <alternativeName>
        <fullName evidence="1">GFAT</fullName>
    </alternativeName>
    <alternativeName>
        <fullName evidence="1">Glucosamine-6-phosphate synthase</fullName>
    </alternativeName>
    <alternativeName>
        <fullName evidence="1">Hexosephosphate aminotransferase</fullName>
    </alternativeName>
    <alternativeName>
        <fullName evidence="1">L-glutamine--D-fructose-6-phosphate amidotransferase</fullName>
    </alternativeName>
</protein>
<reference key="1">
    <citation type="journal article" date="2003" name="Proc. Natl. Acad. Sci. U.S.A.">
        <title>The genome sequence of Clostridium tetani, the causative agent of tetanus disease.</title>
        <authorList>
            <person name="Brueggemann H."/>
            <person name="Baeumer S."/>
            <person name="Fricke W.F."/>
            <person name="Wiezer A."/>
            <person name="Liesegang H."/>
            <person name="Decker I."/>
            <person name="Herzberg C."/>
            <person name="Martinez-Arias R."/>
            <person name="Merkl R."/>
            <person name="Henne A."/>
            <person name="Gottschalk G."/>
        </authorList>
    </citation>
    <scope>NUCLEOTIDE SEQUENCE [LARGE SCALE GENOMIC DNA]</scope>
    <source>
        <strain>Massachusetts / E88</strain>
    </source>
</reference>
<gene>
    <name evidence="1" type="primary">glmS</name>
    <name type="ordered locus">CTC_02543</name>
</gene>
<organism>
    <name type="scientific">Clostridium tetani (strain Massachusetts / E88)</name>
    <dbReference type="NCBI Taxonomy" id="212717"/>
    <lineage>
        <taxon>Bacteria</taxon>
        <taxon>Bacillati</taxon>
        <taxon>Bacillota</taxon>
        <taxon>Clostridia</taxon>
        <taxon>Eubacteriales</taxon>
        <taxon>Clostridiaceae</taxon>
        <taxon>Clostridium</taxon>
    </lineage>
</organism>
<comment type="function">
    <text evidence="1">Catalyzes the first step in hexosamine metabolism, converting fructose-6P into glucosamine-6P using glutamine as a nitrogen source.</text>
</comment>
<comment type="catalytic activity">
    <reaction evidence="1">
        <text>D-fructose 6-phosphate + L-glutamine = D-glucosamine 6-phosphate + L-glutamate</text>
        <dbReference type="Rhea" id="RHEA:13237"/>
        <dbReference type="ChEBI" id="CHEBI:29985"/>
        <dbReference type="ChEBI" id="CHEBI:58359"/>
        <dbReference type="ChEBI" id="CHEBI:58725"/>
        <dbReference type="ChEBI" id="CHEBI:61527"/>
        <dbReference type="EC" id="2.6.1.16"/>
    </reaction>
</comment>
<comment type="subunit">
    <text evidence="1">Homodimer.</text>
</comment>
<comment type="subcellular location">
    <subcellularLocation>
        <location evidence="1">Cytoplasm</location>
    </subcellularLocation>
</comment>
<comment type="sequence caution" evidence="2">
    <conflict type="erroneous initiation">
        <sequence resource="EMBL-CDS" id="AAO37003"/>
    </conflict>
</comment>
<evidence type="ECO:0000255" key="1">
    <source>
        <dbReference type="HAMAP-Rule" id="MF_00164"/>
    </source>
</evidence>
<evidence type="ECO:0000305" key="2"/>
<feature type="initiator methionine" description="Removed" evidence="1">
    <location>
        <position position="1"/>
    </location>
</feature>
<feature type="chain" id="PRO_0000135324" description="Glutamine--fructose-6-phosphate aminotransferase [isomerizing]">
    <location>
        <begin position="2"/>
        <end position="608"/>
    </location>
</feature>
<feature type="domain" description="Glutamine amidotransferase type-2" evidence="1">
    <location>
        <begin position="2"/>
        <end position="217"/>
    </location>
</feature>
<feature type="domain" description="SIS 1" evidence="1">
    <location>
        <begin position="284"/>
        <end position="424"/>
    </location>
</feature>
<feature type="domain" description="SIS 2" evidence="1">
    <location>
        <begin position="453"/>
        <end position="598"/>
    </location>
</feature>
<feature type="active site" description="Nucleophile; for GATase activity" evidence="1">
    <location>
        <position position="2"/>
    </location>
</feature>
<feature type="active site" description="For Fru-6P isomerization activity" evidence="1">
    <location>
        <position position="603"/>
    </location>
</feature>
<keyword id="KW-0032">Aminotransferase</keyword>
<keyword id="KW-0963">Cytoplasm</keyword>
<keyword id="KW-0315">Glutamine amidotransferase</keyword>
<keyword id="KW-1185">Reference proteome</keyword>
<keyword id="KW-0677">Repeat</keyword>
<keyword id="KW-0808">Transferase</keyword>
<accession>Q890U2</accession>